<dbReference type="EC" id="3.4.23.-"/>
<dbReference type="EC" id="2.7.7.49"/>
<dbReference type="EC" id="2.7.7.7"/>
<dbReference type="EC" id="3.1.26.4"/>
<dbReference type="EMBL" id="Z48149">
    <property type="protein sequence ID" value="CAA88158.1"/>
    <property type="status" value="ALT_SEQ"/>
    <property type="molecule type" value="Genomic_DNA"/>
</dbReference>
<dbReference type="EMBL" id="Z74845">
    <property type="protein sequence ID" value="CAA99118.1"/>
    <property type="molecule type" value="Genomic_DNA"/>
</dbReference>
<dbReference type="EMBL" id="Z74846">
    <property type="protein sequence ID" value="CAA99122.1"/>
    <property type="molecule type" value="Genomic_DNA"/>
</dbReference>
<dbReference type="EMBL" id="BK006948">
    <property type="protein sequence ID" value="DAA10679.1"/>
    <property type="molecule type" value="Genomic_DNA"/>
</dbReference>
<dbReference type="PIR" id="S69975">
    <property type="entry name" value="S69975"/>
</dbReference>
<dbReference type="RefSeq" id="NP_058181.1">
    <molecule id="Q12273-1"/>
    <property type="nucleotide sequence ID" value="NM_001184384.2"/>
</dbReference>
<dbReference type="SMR" id="Q12273"/>
<dbReference type="BioGRID" id="34299">
    <property type="interactions" value="12"/>
</dbReference>
<dbReference type="DIP" id="DIP-8936N"/>
<dbReference type="FunCoup" id="Q12273">
    <property type="interactions" value="82"/>
</dbReference>
<dbReference type="IntAct" id="Q12273">
    <property type="interactions" value="7"/>
</dbReference>
<dbReference type="GlyGen" id="Q12273">
    <property type="glycosylation" value="3 sites"/>
</dbReference>
<dbReference type="PaxDb" id="4932-YOL103W-B"/>
<dbReference type="PeptideAtlas" id="Q12273"/>
<dbReference type="GeneID" id="854049"/>
<dbReference type="KEGG" id="sce:YOL103W-B"/>
<dbReference type="AGR" id="SGD:S000007350"/>
<dbReference type="SGD" id="S000007350">
    <property type="gene designation" value="YOL103W-B"/>
</dbReference>
<dbReference type="VEuPathDB" id="FungiDB:YOL103W-B"/>
<dbReference type="eggNOG" id="KOG0017">
    <property type="taxonomic scope" value="Eukaryota"/>
</dbReference>
<dbReference type="HOGENOM" id="CLU_244151_0_0_1"/>
<dbReference type="InParanoid" id="Q12273"/>
<dbReference type="OrthoDB" id="5423336at2759"/>
<dbReference type="Proteomes" id="UP000002311">
    <property type="component" value="Chromosome XV"/>
</dbReference>
<dbReference type="RNAct" id="Q12273">
    <property type="molecule type" value="protein"/>
</dbReference>
<dbReference type="GO" id="GO:0005737">
    <property type="term" value="C:cytoplasm"/>
    <property type="evidence" value="ECO:0007669"/>
    <property type="project" value="UniProtKB-SubCell"/>
</dbReference>
<dbReference type="GO" id="GO:0005634">
    <property type="term" value="C:nucleus"/>
    <property type="evidence" value="ECO:0000314"/>
    <property type="project" value="SGD"/>
</dbReference>
<dbReference type="GO" id="GO:0004190">
    <property type="term" value="F:aspartic-type endopeptidase activity"/>
    <property type="evidence" value="ECO:0007669"/>
    <property type="project" value="UniProtKB-KW"/>
</dbReference>
<dbReference type="GO" id="GO:0005524">
    <property type="term" value="F:ATP binding"/>
    <property type="evidence" value="ECO:0007669"/>
    <property type="project" value="UniProtKB-KW"/>
</dbReference>
<dbReference type="GO" id="GO:0003677">
    <property type="term" value="F:DNA binding"/>
    <property type="evidence" value="ECO:0007669"/>
    <property type="project" value="UniProtKB-KW"/>
</dbReference>
<dbReference type="GO" id="GO:0003887">
    <property type="term" value="F:DNA-directed DNA polymerase activity"/>
    <property type="evidence" value="ECO:0007669"/>
    <property type="project" value="UniProtKB-KW"/>
</dbReference>
<dbReference type="GO" id="GO:0003723">
    <property type="term" value="F:RNA binding"/>
    <property type="evidence" value="ECO:0007669"/>
    <property type="project" value="UniProtKB-KW"/>
</dbReference>
<dbReference type="GO" id="GO:0003964">
    <property type="term" value="F:RNA-directed DNA polymerase activity"/>
    <property type="evidence" value="ECO:0007669"/>
    <property type="project" value="UniProtKB-KW"/>
</dbReference>
<dbReference type="GO" id="GO:0004523">
    <property type="term" value="F:RNA-DNA hybrid ribonuclease activity"/>
    <property type="evidence" value="ECO:0007669"/>
    <property type="project" value="UniProtKB-EC"/>
</dbReference>
<dbReference type="GO" id="GO:0008270">
    <property type="term" value="F:zinc ion binding"/>
    <property type="evidence" value="ECO:0007669"/>
    <property type="project" value="UniProtKB-KW"/>
</dbReference>
<dbReference type="GO" id="GO:0015074">
    <property type="term" value="P:DNA integration"/>
    <property type="evidence" value="ECO:0007669"/>
    <property type="project" value="UniProtKB-KW"/>
</dbReference>
<dbReference type="GO" id="GO:0006310">
    <property type="term" value="P:DNA recombination"/>
    <property type="evidence" value="ECO:0007669"/>
    <property type="project" value="UniProtKB-KW"/>
</dbReference>
<dbReference type="GO" id="GO:0006508">
    <property type="term" value="P:proteolysis"/>
    <property type="evidence" value="ECO:0007669"/>
    <property type="project" value="UniProtKB-KW"/>
</dbReference>
<dbReference type="GO" id="GO:0032196">
    <property type="term" value="P:transposition"/>
    <property type="evidence" value="ECO:0007669"/>
    <property type="project" value="UniProtKB-KW"/>
</dbReference>
<dbReference type="GO" id="GO:0075523">
    <property type="term" value="P:viral translational frameshifting"/>
    <property type="evidence" value="ECO:0007669"/>
    <property type="project" value="UniProtKB-KW"/>
</dbReference>
<dbReference type="CDD" id="cd09272">
    <property type="entry name" value="RNase_HI_RT_Ty1"/>
    <property type="match status" value="1"/>
</dbReference>
<dbReference type="FunFam" id="3.30.420.10:FF:000050">
    <property type="entry name" value="Transposon Ty2-DR3 Gag-Pol polyprotein"/>
    <property type="match status" value="1"/>
</dbReference>
<dbReference type="Gene3D" id="3.30.420.10">
    <property type="entry name" value="Ribonuclease H-like superfamily/Ribonuclease H"/>
    <property type="match status" value="1"/>
</dbReference>
<dbReference type="InterPro" id="IPR001969">
    <property type="entry name" value="Aspartic_peptidase_AS"/>
</dbReference>
<dbReference type="InterPro" id="IPR043502">
    <property type="entry name" value="DNA/RNA_pol_sf"/>
</dbReference>
<dbReference type="InterPro" id="IPR001584">
    <property type="entry name" value="Integrase_cat-core"/>
</dbReference>
<dbReference type="InterPro" id="IPR039537">
    <property type="entry name" value="Retrotran_Ty1/copia-like"/>
</dbReference>
<dbReference type="InterPro" id="IPR012337">
    <property type="entry name" value="RNaseH-like_sf"/>
</dbReference>
<dbReference type="InterPro" id="IPR036397">
    <property type="entry name" value="RNaseH_sf"/>
</dbReference>
<dbReference type="InterPro" id="IPR013103">
    <property type="entry name" value="RVT_2"/>
</dbReference>
<dbReference type="InterPro" id="IPR015820">
    <property type="entry name" value="TYA"/>
</dbReference>
<dbReference type="PANTHER" id="PTHR42648">
    <property type="entry name" value="TRANSPOSASE, PUTATIVE-RELATED"/>
    <property type="match status" value="1"/>
</dbReference>
<dbReference type="PANTHER" id="PTHR42648:SF11">
    <property type="entry name" value="TRANSPOSON TY4-P GAG-POL POLYPROTEIN"/>
    <property type="match status" value="1"/>
</dbReference>
<dbReference type="Pfam" id="PF00665">
    <property type="entry name" value="rve"/>
    <property type="match status" value="1"/>
</dbReference>
<dbReference type="Pfam" id="PF07727">
    <property type="entry name" value="RVT_2"/>
    <property type="match status" value="1"/>
</dbReference>
<dbReference type="Pfam" id="PF01021">
    <property type="entry name" value="TYA"/>
    <property type="match status" value="1"/>
</dbReference>
<dbReference type="SUPFAM" id="SSF56672">
    <property type="entry name" value="DNA/RNA polymerases"/>
    <property type="match status" value="1"/>
</dbReference>
<dbReference type="SUPFAM" id="SSF53098">
    <property type="entry name" value="Ribonuclease H-like"/>
    <property type="match status" value="1"/>
</dbReference>
<dbReference type="PROSITE" id="PS00141">
    <property type="entry name" value="ASP_PROTEASE"/>
    <property type="match status" value="1"/>
</dbReference>
<dbReference type="PROSITE" id="PS50994">
    <property type="entry name" value="INTEGRASE"/>
    <property type="match status" value="1"/>
</dbReference>
<reference key="1">
    <citation type="journal article" date="1995" name="Yeast">
        <title>Sequence analysis of a 44 kb DNA fragment of yeast chromosome XV including the Ty1-H3 retrotransposon, the suf1(+) frameshift suppressor gene for tRNA-Gly, the yeast transfer RNA-Thr-1a and a delta element.</title>
        <authorList>
            <person name="Vandenbol M."/>
            <person name="Durand P."/>
            <person name="Portetelle D."/>
            <person name="Hilger F."/>
        </authorList>
    </citation>
    <scope>NUCLEOTIDE SEQUENCE [GENOMIC DNA]</scope>
</reference>
<reference key="2">
    <citation type="journal article" date="1997" name="Nature">
        <title>The nucleotide sequence of Saccharomyces cerevisiae chromosome XV.</title>
        <authorList>
            <person name="Dujon B."/>
            <person name="Albermann K."/>
            <person name="Aldea M."/>
            <person name="Alexandraki D."/>
            <person name="Ansorge W."/>
            <person name="Arino J."/>
            <person name="Benes V."/>
            <person name="Bohn C."/>
            <person name="Bolotin-Fukuhara M."/>
            <person name="Bordonne R."/>
            <person name="Boyer J."/>
            <person name="Camasses A."/>
            <person name="Casamayor A."/>
            <person name="Casas C."/>
            <person name="Cheret G."/>
            <person name="Cziepluch C."/>
            <person name="Daignan-Fornier B."/>
            <person name="Dang V.-D."/>
            <person name="de Haan M."/>
            <person name="Delius H."/>
            <person name="Durand P."/>
            <person name="Fairhead C."/>
            <person name="Feldmann H."/>
            <person name="Gaillon L."/>
            <person name="Galisson F."/>
            <person name="Gamo F.-J."/>
            <person name="Gancedo C."/>
            <person name="Goffeau A."/>
            <person name="Goulding S.E."/>
            <person name="Grivell L.A."/>
            <person name="Habbig B."/>
            <person name="Hand N.J."/>
            <person name="Hani J."/>
            <person name="Hattenhorst U."/>
            <person name="Hebling U."/>
            <person name="Hernando Y."/>
            <person name="Herrero E."/>
            <person name="Heumann K."/>
            <person name="Hiesel R."/>
            <person name="Hilger F."/>
            <person name="Hofmann B."/>
            <person name="Hollenberg C.P."/>
            <person name="Hughes B."/>
            <person name="Jauniaux J.-C."/>
            <person name="Kalogeropoulos A."/>
            <person name="Katsoulou C."/>
            <person name="Kordes E."/>
            <person name="Lafuente M.J."/>
            <person name="Landt O."/>
            <person name="Louis E.J."/>
            <person name="Maarse A.C."/>
            <person name="Madania A."/>
            <person name="Mannhaupt G."/>
            <person name="Marck C."/>
            <person name="Martin R.P."/>
            <person name="Mewes H.-W."/>
            <person name="Michaux G."/>
            <person name="Paces V."/>
            <person name="Parle-McDermott A.G."/>
            <person name="Pearson B.M."/>
            <person name="Perrin A."/>
            <person name="Pettersson B."/>
            <person name="Poch O."/>
            <person name="Pohl T.M."/>
            <person name="Poirey R."/>
            <person name="Portetelle D."/>
            <person name="Pujol A."/>
            <person name="Purnelle B."/>
            <person name="Ramezani Rad M."/>
            <person name="Rechmann S."/>
            <person name="Schwager C."/>
            <person name="Schweizer M."/>
            <person name="Sor F."/>
            <person name="Sterky F."/>
            <person name="Tarassov I.A."/>
            <person name="Teodoru C."/>
            <person name="Tettelin H."/>
            <person name="Thierry A."/>
            <person name="Tobiasch E."/>
            <person name="Tzermia M."/>
            <person name="Uhlen M."/>
            <person name="Unseld M."/>
            <person name="Valens M."/>
            <person name="Vandenbol M."/>
            <person name="Vetter I."/>
            <person name="Vlcek C."/>
            <person name="Voet M."/>
            <person name="Volckaert G."/>
            <person name="Voss H."/>
            <person name="Wambutt R."/>
            <person name="Wedler H."/>
            <person name="Wiemann S."/>
            <person name="Winsor B."/>
            <person name="Wolfe K.H."/>
            <person name="Zollner A."/>
            <person name="Zumstein E."/>
            <person name="Kleine K."/>
        </authorList>
    </citation>
    <scope>NUCLEOTIDE SEQUENCE [LARGE SCALE GENOMIC DNA]</scope>
    <source>
        <strain>ATCC 204508 / S288c</strain>
    </source>
</reference>
<reference key="3">
    <citation type="journal article" date="2014" name="G3 (Bethesda)">
        <title>The reference genome sequence of Saccharomyces cerevisiae: Then and now.</title>
        <authorList>
            <person name="Engel S.R."/>
            <person name="Dietrich F.S."/>
            <person name="Fisk D.G."/>
            <person name="Binkley G."/>
            <person name="Balakrishnan R."/>
            <person name="Costanzo M.C."/>
            <person name="Dwight S.S."/>
            <person name="Hitz B.C."/>
            <person name="Karra K."/>
            <person name="Nash R.S."/>
            <person name="Weng S."/>
            <person name="Wong E.D."/>
            <person name="Lloyd P."/>
            <person name="Skrzypek M.S."/>
            <person name="Miyasato S.R."/>
            <person name="Simison M."/>
            <person name="Cherry J.M."/>
        </authorList>
    </citation>
    <scope>GENOME REANNOTATION</scope>
    <source>
        <strain>ATCC 204508 / S288c</strain>
    </source>
</reference>
<reference key="4">
    <citation type="journal article" date="1998" name="Genome Res.">
        <title>Transposable elements and genome organization: a comprehensive survey of retrotransposons revealed by the complete Saccharomyces cerevisiae genome sequence.</title>
        <authorList>
            <person name="Kim J.M."/>
            <person name="Vanguri S."/>
            <person name="Boeke J.D."/>
            <person name="Gabriel A."/>
            <person name="Voytas D.F."/>
        </authorList>
    </citation>
    <scope>NOMENCLATURE</scope>
</reference>
<reference key="5">
    <citation type="journal article" date="2005" name="Cytogenet. Genome Res.">
        <title>Happy together: the life and times of Ty retrotransposons and their hosts.</title>
        <authorList>
            <person name="Lesage P."/>
            <person name="Todeschini A.L."/>
        </authorList>
    </citation>
    <scope>REVIEW</scope>
</reference>
<reference key="6">
    <citation type="journal article" date="2005" name="Cytogenet. Genome Res.">
        <title>Reverse transcriptase and integrase of the Saccharomyces cerevisiae Ty1 element.</title>
        <authorList>
            <person name="Wilhelm F.-X."/>
            <person name="Wilhelm M."/>
            <person name="Gabriel A."/>
        </authorList>
    </citation>
    <scope>REVIEW</scope>
    <scope>DOMAINS</scope>
</reference>
<sequence>MESQQLSNYPQISHGSACASVTSKEVHTNQDPLDVSASKTEECEKASTKANSQQTTTPASSAVPENPHHASPQPASVPPPQNGPYPQQCMMTQNQANPSGWSFYGHPSMIPYTPYQMSPMYFPPGPQSQFPQYPSSVGTPLSTPSPESGNTFTDSSSADSDMTSTKKYVRPPPMLTSPNDFPNWVKTYIKFLQNSNLGGIIPTVNGKPVRQITDDELTFLYNTFQIFAPSQFLPTWVKDILSVDYTDIMKILSKSIEKMQSDTQEANDIVTLANLQYNGSTPADAFETKVTNIINRLNNNGIHINNKVACQLIMRGLSGEYKFLRYTRHRHLNMTVAELFLDIHAIYEEQQGSRNSKPNYRRNLSDEKNDSRSYTNTTKPKVIARNPQKTNNSKSKTARAHNVSTSNNSPSTDNDSISKSTTEPIQLNNKHDLHLGQELTESTVNHTNHSDDELPGHLLLDSGASRTLIRSAHHIHSASSNPDINVVDAQKRNIPINAIGDLQFHFQDNTKTSIKVLHTPNIAYDLLSLNELAAVDITACFTKNVLERSDGTVLAPIVKYGDFYWVSKKYLLPSNISVPTINNVHTSESTRKYPYPFIHRMLAHANAQTIRYSLKNNTITYFNESDVDWSSAIDYQCPDCLIGKSTKHRHIKGSRLKYQNSYEPFQYLHTDIFGPVHNLPKSAPSYFISFTDETTKFRWVYPLHDRREDSILDVFTTILAFIKNQFQASVLVIQMDRGSEYTNRTLHKFLEKNGITPCYTTTADSRAHGVAERLNRTLLDDCRTQLQCSGLPNHLWFSAIEFSTIVRNSLASPKSKKSARQHAGLAGLDISTLLPFGQPVIVNDHNPNSKIHPRGIPGYALHPSRNSYGYIIYLPSLKKTVDTTNYVILQGKESRLDQFNYDALTFDEDLNRLTASYQSFIASNEIQQSDDLNIESDHDFQSDIELHPEQPRNVLSKAVSPTDSTPPSTHTEDSKRVSKTNIRAPREVDPNISESNILPSKKRSSTPQISNIESTGSGGMHKLNVPLLAPMSQSNTHESSHASKSKDFRHSDSYSENETNHTNVPISSTGGTNNKTVPQISDQETEKRIIHRSPSIDASPPENNSSHNIVPIKTPTTVSEQNTEESIIADLPLPDLPPESPTEFPDPFKELPPINSHQTNSSLGGIGDSNAYTTINSKKRSLEDNETEIKVSRDTWNTKNMRSLEPPRSKKRIHLIAAVKAVKSIKPIRTTLRYDEAITYNKDIKEKEKYIEAYHKEVNQLLKMKTWDTDEYYDRKEIDPKRVINSMFIFNKKRDGTHKARFVARGDIQHPDTYDSGMQSNTVHHYALMTSLSLALDNNYYITQLDISSAYLYADIKEELYIRPPPHLGMNDKLIRLKKSLYGLKQSGANWYETIKSYLIKQCGMEEVRGWSCVFKNSQVTICLFVDDMILFSKDLNANKKIITTLKKQYDTKIINLGESDNEIQYDILGLEIKYQRGKYMKLGMENSLTEKIPKLNVPLNPKGRKLSAPGQPGLYIDQDELEIDEDEYKEKVHEMQKLIGLASYVGYKFRFDLLYYINTLAQHILFPSRQVLDMTYELIQFMWDTRDKQLIWHKNKPTEPDNKLVAISDASYGNQPYYKSQIGNIYLLNGKVIGGKSTKASLTCTSTTEAEIHAISESVPLLNNLSYLIQELNKKPIIKGLLTDSRSTISIIKSTNEEKFRNRFFGTKAMRLRDEVSGNNLYVYYIETKKNIADVMTKPLPIKTFKLLTNKWIH</sequence>
<name>YO11B_YEAST</name>
<feature type="chain" id="PRO_0000279153" description="Transposon Ty1-OL Gag-Pol polyprotein">
    <location>
        <begin position="1"/>
        <end position="1755"/>
    </location>
</feature>
<feature type="chain" id="PRO_0000279154" description="Capsid protein" evidence="1">
    <location>
        <begin position="1"/>
        <end position="401"/>
    </location>
</feature>
<feature type="chain" id="PRO_0000279155" description="Ty1 protease" evidence="1">
    <location>
        <begin position="402"/>
        <end position="582"/>
    </location>
</feature>
<feature type="chain" id="PRO_0000279156" description="Integrase" evidence="1">
    <location>
        <begin position="583"/>
        <end position="1217"/>
    </location>
</feature>
<feature type="chain" id="PRO_0000279157" description="Reverse transcriptase/ribonuclease H" evidence="1">
    <location>
        <begin position="1218"/>
        <end position="1755"/>
    </location>
</feature>
<feature type="domain" description="Integrase catalytic" evidence="3">
    <location>
        <begin position="660"/>
        <end position="835"/>
    </location>
</feature>
<feature type="domain" description="Reverse transcriptase Ty1/copia-type">
    <location>
        <begin position="1338"/>
        <end position="1476"/>
    </location>
</feature>
<feature type="domain" description="RNase H Ty1/copia-type">
    <location>
        <begin position="1610"/>
        <end position="1752"/>
    </location>
</feature>
<feature type="region of interest" description="Disordered" evidence="5">
    <location>
        <begin position="1"/>
        <end position="93"/>
    </location>
</feature>
<feature type="region of interest" description="Disordered" evidence="5">
    <location>
        <begin position="126"/>
        <end position="173"/>
    </location>
</feature>
<feature type="region of interest" description="RNA-binding" evidence="1">
    <location>
        <begin position="299"/>
        <end position="401"/>
    </location>
</feature>
<feature type="region of interest" description="Disordered" evidence="5">
    <location>
        <begin position="352"/>
        <end position="421"/>
    </location>
</feature>
<feature type="region of interest" description="Integrase-type zinc finger-like">
    <location>
        <begin position="583"/>
        <end position="640"/>
    </location>
</feature>
<feature type="region of interest" description="Disordered" evidence="5">
    <location>
        <begin position="956"/>
        <end position="1087"/>
    </location>
</feature>
<feature type="region of interest" description="Disordered" evidence="5">
    <location>
        <begin position="1092"/>
        <end position="1111"/>
    </location>
</feature>
<feature type="region of interest" description="Disordered" evidence="5">
    <location>
        <begin position="1130"/>
        <end position="1171"/>
    </location>
</feature>
<feature type="short sequence motif" description="Bipartite nuclear localization signal" evidence="1">
    <location>
        <begin position="1178"/>
        <end position="1212"/>
    </location>
</feature>
<feature type="compositionally biased region" description="Polar residues" evidence="5">
    <location>
        <begin position="1"/>
        <end position="23"/>
    </location>
</feature>
<feature type="compositionally biased region" description="Polar residues" evidence="5">
    <location>
        <begin position="48"/>
        <end position="60"/>
    </location>
</feature>
<feature type="compositionally biased region" description="Polar residues" evidence="5">
    <location>
        <begin position="127"/>
        <end position="152"/>
    </location>
</feature>
<feature type="compositionally biased region" description="Low complexity" evidence="5">
    <location>
        <begin position="153"/>
        <end position="165"/>
    </location>
</feature>
<feature type="compositionally biased region" description="Low complexity" evidence="5">
    <location>
        <begin position="402"/>
        <end position="418"/>
    </location>
</feature>
<feature type="compositionally biased region" description="Low complexity" evidence="5">
    <location>
        <begin position="960"/>
        <end position="969"/>
    </location>
</feature>
<feature type="compositionally biased region" description="Polar residues" evidence="5">
    <location>
        <begin position="1005"/>
        <end position="1015"/>
    </location>
</feature>
<feature type="compositionally biased region" description="Basic and acidic residues" evidence="5">
    <location>
        <begin position="1038"/>
        <end position="1053"/>
    </location>
</feature>
<feature type="compositionally biased region" description="Polar residues" evidence="5">
    <location>
        <begin position="1054"/>
        <end position="1082"/>
    </location>
</feature>
<feature type="compositionally biased region" description="Polar residues" evidence="5">
    <location>
        <begin position="1101"/>
        <end position="1111"/>
    </location>
</feature>
<feature type="active site" description="For protease activity; shared with dimeric partner" evidence="4">
    <location>
        <position position="461"/>
    </location>
</feature>
<feature type="binding site" evidence="3">
    <location>
        <position position="671"/>
    </location>
    <ligand>
        <name>Mg(2+)</name>
        <dbReference type="ChEBI" id="CHEBI:18420"/>
        <label>1</label>
        <note>catalytic; for integrase activity</note>
    </ligand>
</feature>
<feature type="binding site" evidence="3">
    <location>
        <position position="736"/>
    </location>
    <ligand>
        <name>Mg(2+)</name>
        <dbReference type="ChEBI" id="CHEBI:18420"/>
        <label>1</label>
        <note>catalytic; for integrase activity</note>
    </ligand>
</feature>
<feature type="binding site" evidence="3">
    <location>
        <position position="1346"/>
    </location>
    <ligand>
        <name>Mg(2+)</name>
        <dbReference type="ChEBI" id="CHEBI:18420"/>
        <label>2</label>
        <note>catalytic; for reverse transcriptase activity</note>
    </ligand>
</feature>
<feature type="binding site" evidence="3">
    <location>
        <position position="1427"/>
    </location>
    <ligand>
        <name>Mg(2+)</name>
        <dbReference type="ChEBI" id="CHEBI:18420"/>
        <label>2</label>
        <note>catalytic; for reverse transcriptase activity</note>
    </ligand>
</feature>
<feature type="binding site" evidence="3">
    <location>
        <position position="1428"/>
    </location>
    <ligand>
        <name>Mg(2+)</name>
        <dbReference type="ChEBI" id="CHEBI:18420"/>
        <label>2</label>
        <note>catalytic; for reverse transcriptase activity</note>
    </ligand>
</feature>
<feature type="binding site" evidence="3">
    <location>
        <position position="1610"/>
    </location>
    <ligand>
        <name>Mg(2+)</name>
        <dbReference type="ChEBI" id="CHEBI:18420"/>
        <label>3</label>
        <note>catalytic; for RNase H activity</note>
    </ligand>
</feature>
<feature type="binding site" evidence="3">
    <location>
        <position position="1652"/>
    </location>
    <ligand>
        <name>Mg(2+)</name>
        <dbReference type="ChEBI" id="CHEBI:18420"/>
        <label>3</label>
        <note>catalytic; for RNase H activity</note>
    </ligand>
</feature>
<feature type="binding site" evidence="3">
    <location>
        <position position="1685"/>
    </location>
    <ligand>
        <name>Mg(2+)</name>
        <dbReference type="ChEBI" id="CHEBI:18420"/>
        <label>3</label>
        <note>catalytic; for RNase H activity</note>
    </ligand>
</feature>
<feature type="site" description="Cleavage; by Ty1 protease" evidence="1">
    <location>
        <begin position="401"/>
        <end position="402"/>
    </location>
</feature>
<feature type="site" description="Cleavage; by Ty1 protease" evidence="1">
    <location>
        <begin position="582"/>
        <end position="583"/>
    </location>
</feature>
<feature type="site" description="Cleavage; by Ty1 protease" evidence="1">
    <location>
        <begin position="1217"/>
        <end position="1218"/>
    </location>
</feature>
<feature type="modified residue" description="Phosphoserine" evidence="2">
    <location>
        <position position="416"/>
    </location>
</feature>
<keyword id="KW-0064">Aspartyl protease</keyword>
<keyword id="KW-0067">ATP-binding</keyword>
<keyword id="KW-0963">Cytoplasm</keyword>
<keyword id="KW-0229">DNA integration</keyword>
<keyword id="KW-0233">DNA recombination</keyword>
<keyword id="KW-0238">DNA-binding</keyword>
<keyword id="KW-0239">DNA-directed DNA polymerase</keyword>
<keyword id="KW-0255">Endonuclease</keyword>
<keyword id="KW-0378">Hydrolase</keyword>
<keyword id="KW-0460">Magnesium</keyword>
<keyword id="KW-0479">Metal-binding</keyword>
<keyword id="KW-0511">Multifunctional enzyme</keyword>
<keyword id="KW-0540">Nuclease</keyword>
<keyword id="KW-0547">Nucleotide-binding</keyword>
<keyword id="KW-0548">Nucleotidyltransferase</keyword>
<keyword id="KW-0539">Nucleus</keyword>
<keyword id="KW-0597">Phosphoprotein</keyword>
<keyword id="KW-0645">Protease</keyword>
<keyword id="KW-1185">Reference proteome</keyword>
<keyword id="KW-0688">Ribosomal frameshifting</keyword>
<keyword id="KW-0694">RNA-binding</keyword>
<keyword id="KW-0695">RNA-directed DNA polymerase</keyword>
<keyword id="KW-0808">Transferase</keyword>
<keyword id="KW-0814">Transposable element</keyword>
<keyword id="KW-0815">Transposition</keyword>
<keyword id="KW-1188">Viral release from host cell</keyword>
<keyword id="KW-0917">Virion maturation</keyword>
<keyword id="KW-0862">Zinc</keyword>
<keyword id="KW-0863">Zinc-finger</keyword>
<organism>
    <name type="scientific">Saccharomyces cerevisiae (strain ATCC 204508 / S288c)</name>
    <name type="common">Baker's yeast</name>
    <dbReference type="NCBI Taxonomy" id="559292"/>
    <lineage>
        <taxon>Eukaryota</taxon>
        <taxon>Fungi</taxon>
        <taxon>Dikarya</taxon>
        <taxon>Ascomycota</taxon>
        <taxon>Saccharomycotina</taxon>
        <taxon>Saccharomycetes</taxon>
        <taxon>Saccharomycetales</taxon>
        <taxon>Saccharomycetaceae</taxon>
        <taxon>Saccharomyces</taxon>
    </lineage>
</organism>
<proteinExistence type="inferred from homology"/>
<gene>
    <name type="primary">TY1B-OL</name>
    <name type="synonym">YOLWTy1-1 POL</name>
    <name type="ordered locus">YOL103W-B</name>
    <name type="ORF">O0770</name>
</gene>
<comment type="function">
    <text evidence="1">Capsid protein (CA) is the structural component of the virus-like particle (VLP), forming the shell that encapsulates the retrotransposons dimeric RNA genome. The particles are assembled from trimer-clustered units and there are holes in the capsid shells that allow for the diffusion of macromolecules. CA also has nucleocapsid-like chaperone activity, promoting primer tRNA(i)-Met annealing to the multipartite primer-binding site (PBS), dimerization of Ty1 RNA and initiation of reverse transcription (By similarity).</text>
</comment>
<comment type="function">
    <text evidence="1">The aspartyl protease (PR) mediates the proteolytic cleavages of the Gag and Gag-Pol polyproteins after assembly of the VLP.</text>
</comment>
<comment type="function">
    <text evidence="1">Reverse transcriptase/ribonuclease H (RT) is a multifunctional enzyme that catalyzes the conversion of the retro-elements RNA genome into dsDNA within the VLP. The enzyme displays a DNA polymerase activity that can copy either DNA or RNA templates, and a ribonuclease H (RNase H) activity that cleaves the RNA strand of RNA-DNA heteroduplexes during plus-strand synthesis and hydrolyzes RNA primers. The conversion leads to a linear dsDNA copy of the retrotransposon that includes long terminal repeats (LTRs) at both ends (By similarity).</text>
</comment>
<comment type="function">
    <text evidence="1">Integrase (IN) targets the VLP to the nucleus, where a subparticle preintegration complex (PIC) containing at least integrase and the newly synthesized dsDNA copy of the retrotransposon must transit the nuclear membrane. Once in the nucleus, integrase performs the integration of the dsDNA into the host genome (By similarity).</text>
</comment>
<comment type="catalytic activity">
    <reaction>
        <text>DNA(n) + a 2'-deoxyribonucleoside 5'-triphosphate = DNA(n+1) + diphosphate</text>
        <dbReference type="Rhea" id="RHEA:22508"/>
        <dbReference type="Rhea" id="RHEA-COMP:17339"/>
        <dbReference type="Rhea" id="RHEA-COMP:17340"/>
        <dbReference type="ChEBI" id="CHEBI:33019"/>
        <dbReference type="ChEBI" id="CHEBI:61560"/>
        <dbReference type="ChEBI" id="CHEBI:173112"/>
        <dbReference type="EC" id="2.7.7.49"/>
    </reaction>
</comment>
<comment type="catalytic activity">
    <reaction>
        <text>DNA(n) + a 2'-deoxyribonucleoside 5'-triphosphate = DNA(n+1) + diphosphate</text>
        <dbReference type="Rhea" id="RHEA:22508"/>
        <dbReference type="Rhea" id="RHEA-COMP:17339"/>
        <dbReference type="Rhea" id="RHEA-COMP:17340"/>
        <dbReference type="ChEBI" id="CHEBI:33019"/>
        <dbReference type="ChEBI" id="CHEBI:61560"/>
        <dbReference type="ChEBI" id="CHEBI:173112"/>
        <dbReference type="EC" id="2.7.7.7"/>
    </reaction>
</comment>
<comment type="catalytic activity">
    <reaction>
        <text>Endonucleolytic cleavage to 5'-phosphomonoester.</text>
        <dbReference type="EC" id="3.1.26.4"/>
    </reaction>
</comment>
<comment type="subunit">
    <text evidence="1">The capsid protein forms a homotrimer, from which the VLPs are assembled. The protease is a homodimer, whose active site consists of two apposed aspartic acid residues (By similarity).</text>
</comment>
<comment type="subcellular location">
    <subcellularLocation>
        <location>Cytoplasm</location>
    </subcellularLocation>
    <subcellularLocation>
        <location evidence="1">Nucleus</location>
    </subcellularLocation>
</comment>
<comment type="alternative products">
    <event type="ribosomal frameshifting"/>
    <isoform>
        <id>Q12273-1</id>
        <name>Transposon Ty1-OL Gag-Pol polyprotein</name>
        <sequence type="displayed"/>
    </isoform>
    <isoform>
        <id>Q92392-1</id>
        <name>Transposon Ty1-OL Gag polyprotein</name>
        <sequence type="external"/>
    </isoform>
    <text evidence="1">The Gag-Pol polyprotein is generated by a +1 ribosomal frameshift. The ratio of Gag:Gag-Pol varies between 20:1 and 5:1 (By similarity).</text>
</comment>
<comment type="domain">
    <text evidence="1">The C-terminal RNA-binding region of CA is sufficient for all its nucleocapsid-like chaperone activities.</text>
</comment>
<comment type="domain">
    <text evidence="1">Integrase core domain contains the D-x(n)-D-x(35)-E motif, named for the phylogenetically conserved glutamic acid and aspartic acid residues and the invariant 35 amino acid spacing between the second and third acidic residues. Each acidic residue of the D,D(35)E motif is independently essential for the 3'-processing and strand transfer activities of purified integrase protein (By similarity).</text>
</comment>
<comment type="PTM">
    <text evidence="1">Initially, virus-like particles (VLPs) are composed of the structural unprocessed proteins Gag and Gag-Pol, and also contain the host initiator methionine tRNA (tRNA(i)-Met) which serves as a primer for minus-strand DNA synthesis, and a dimer of genomic Ty RNA. Processing of the polyproteins occurs within the particle and proceeds by an ordered pathway, called maturation. First, the protease (PR) is released by autocatalytic cleavage of the Gag-Pol polyprotein yielding capsid protein p45 and a Pol-p154 precursor protein. This cleavage is a prerequisite for subsequent processing of Pol-p154 at the remaining sites to release the mature structural and catalytic proteins. Maturation takes place prior to the RT reaction and is required to produce transposition-competent VLPs (By similarity).</text>
</comment>
<comment type="miscellaneous">
    <text>Retrotransposons are mobile genetic entities that are able to replicate via an RNA intermediate and a reverse transcription step. In contrast to retroviruses, retrotransposons are non-infectious, lack an envelope and remain intracellular. Ty1 retrotransposons belong to the copia elements (pseudoviridae).</text>
</comment>
<comment type="miscellaneous">
    <molecule>Isoform Transposon Ty1-OL Gag-Pol polyprotein</molecule>
    <text>Produced by +1 ribosomal frameshifting between codon Leu-435 and Gly-436 of the YOL103W-A ORF.</text>
</comment>
<comment type="sequence caution" evidence="6">
    <conflict type="erroneous gene model prediction">
        <sequence resource="EMBL-CDS" id="CAA88158"/>
    </conflict>
</comment>
<evidence type="ECO:0000250" key="1"/>
<evidence type="ECO:0000250" key="2">
    <source>
        <dbReference type="UniProtKB" id="Q99231"/>
    </source>
</evidence>
<evidence type="ECO:0000255" key="3">
    <source>
        <dbReference type="PROSITE-ProRule" id="PRU00457"/>
    </source>
</evidence>
<evidence type="ECO:0000255" key="4">
    <source>
        <dbReference type="PROSITE-ProRule" id="PRU10094"/>
    </source>
</evidence>
<evidence type="ECO:0000256" key="5">
    <source>
        <dbReference type="SAM" id="MobiDB-lite"/>
    </source>
</evidence>
<evidence type="ECO:0000305" key="6"/>
<accession>Q12273</accession>
<accession>D6W1W3</accession>
<protein>
    <recommendedName>
        <fullName>Transposon Ty1-OL Gag-Pol polyprotein</fullName>
    </recommendedName>
    <alternativeName>
        <fullName>Gag-Pol-p199</fullName>
    </alternativeName>
    <alternativeName>
        <fullName>TY1A-TY1B</fullName>
    </alternativeName>
    <alternativeName>
        <fullName>Transposon Ty1 TYA-TYB polyprotein</fullName>
    </alternativeName>
    <alternativeName>
        <fullName>p190</fullName>
    </alternativeName>
    <component>
        <recommendedName>
            <fullName>Capsid protein</fullName>
            <shortName>CA</shortName>
        </recommendedName>
        <alternativeName>
            <fullName>Gag-p45</fullName>
        </alternativeName>
        <alternativeName>
            <fullName>p54</fullName>
        </alternativeName>
    </component>
    <component>
        <recommendedName>
            <fullName>Ty1 protease</fullName>
            <shortName>PR</shortName>
            <ecNumber>3.4.23.-</ecNumber>
        </recommendedName>
        <alternativeName>
            <fullName>Pol-p20</fullName>
        </alternativeName>
        <alternativeName>
            <fullName>p23</fullName>
        </alternativeName>
    </component>
    <component>
        <recommendedName>
            <fullName>Integrase</fullName>
            <shortName>IN</shortName>
        </recommendedName>
        <alternativeName>
            <fullName>Pol-p71</fullName>
        </alternativeName>
        <alternativeName>
            <fullName>p84</fullName>
        </alternativeName>
        <alternativeName>
            <fullName>p90</fullName>
        </alternativeName>
    </component>
    <component>
        <recommendedName>
            <fullName>Reverse transcriptase/ribonuclease H</fullName>
            <shortName>RT</shortName>
            <shortName>RT-RH</shortName>
            <ecNumber>2.7.7.49</ecNumber>
            <ecNumber>2.7.7.7</ecNumber>
            <ecNumber>3.1.26.4</ecNumber>
        </recommendedName>
        <alternativeName>
            <fullName>Pol-p63</fullName>
        </alternativeName>
        <alternativeName>
            <fullName>p60</fullName>
        </alternativeName>
    </component>
</protein>